<sequence length="406" mass="45626">MQVYLVGGAVRDHLLGIDIYDRDWVVVGATPEIMLSQGYTAVGKDFPVFLHPKTKEEHALARTERKSGAGYTGFECFFDQSVTLEEDLIRRDLTINAMAMDEDGNLYDPYGGQKDIDAKVLRHVSQAFVEDPLRVLRVARFAAKLAHLGFSVAEETMQLMRDMAESGELSTLTPERVWQEWHKSLSTSRPDVFLSVLRDCGALAVVLPEIDALFGVPQPEKWHPEIDTGIHTLMVAQQAAKLSDSLPVRFAAQVHDLGKGVTPESEWPSHKMHCHTGLKLIKKLCDRVRVPNEFRDLALMVCEQHSNIHRAAELKPQTIIKILNKFDVWRKAERLQDILICCQADHAGRKGLEDQPYPQAELFMRAYQAAASVDVQAIIKDGFKGPAIRDEQEKRRAEAVKVALGK</sequence>
<organism>
    <name type="scientific">Vibrio campbellii (strain ATCC BAA-1116)</name>
    <dbReference type="NCBI Taxonomy" id="2902295"/>
    <lineage>
        <taxon>Bacteria</taxon>
        <taxon>Pseudomonadati</taxon>
        <taxon>Pseudomonadota</taxon>
        <taxon>Gammaproteobacteria</taxon>
        <taxon>Vibrionales</taxon>
        <taxon>Vibrionaceae</taxon>
        <taxon>Vibrio</taxon>
    </lineage>
</organism>
<accession>A7MWN9</accession>
<comment type="function">
    <text evidence="1">Catalyzes the addition and repair of the essential 3'-terminal CCA sequence in tRNAs without using a nucleic acid template. Adds these three nucleotides in the order of C, C, and A to the tRNA nucleotide-73, using CTP and ATP as substrates and producing inorganic pyrophosphate. tRNA 3'-terminal CCA addition is required both for tRNA processing and repair. Also involved in tRNA surveillance by mediating tandem CCA addition to generate a CCACCA at the 3' terminus of unstable tRNAs. While stable tRNAs receive only 3'-terminal CCA, unstable tRNAs are marked with CCACCA and rapidly degraded.</text>
</comment>
<comment type="catalytic activity">
    <reaction evidence="1">
        <text>a tRNA precursor + 2 CTP + ATP = a tRNA with a 3' CCA end + 3 diphosphate</text>
        <dbReference type="Rhea" id="RHEA:14433"/>
        <dbReference type="Rhea" id="RHEA-COMP:10465"/>
        <dbReference type="Rhea" id="RHEA-COMP:10468"/>
        <dbReference type="ChEBI" id="CHEBI:30616"/>
        <dbReference type="ChEBI" id="CHEBI:33019"/>
        <dbReference type="ChEBI" id="CHEBI:37563"/>
        <dbReference type="ChEBI" id="CHEBI:74896"/>
        <dbReference type="ChEBI" id="CHEBI:83071"/>
        <dbReference type="EC" id="2.7.7.72"/>
    </reaction>
</comment>
<comment type="catalytic activity">
    <reaction evidence="1">
        <text>a tRNA with a 3' CCA end + 2 CTP + ATP = a tRNA with a 3' CCACCA end + 3 diphosphate</text>
        <dbReference type="Rhea" id="RHEA:76235"/>
        <dbReference type="Rhea" id="RHEA-COMP:10468"/>
        <dbReference type="Rhea" id="RHEA-COMP:18655"/>
        <dbReference type="ChEBI" id="CHEBI:30616"/>
        <dbReference type="ChEBI" id="CHEBI:33019"/>
        <dbReference type="ChEBI" id="CHEBI:37563"/>
        <dbReference type="ChEBI" id="CHEBI:83071"/>
        <dbReference type="ChEBI" id="CHEBI:195187"/>
    </reaction>
    <physiologicalReaction direction="left-to-right" evidence="1">
        <dbReference type="Rhea" id="RHEA:76236"/>
    </physiologicalReaction>
</comment>
<comment type="cofactor">
    <cofactor evidence="1">
        <name>Mg(2+)</name>
        <dbReference type="ChEBI" id="CHEBI:18420"/>
    </cofactor>
    <text evidence="1">Magnesium is required for nucleotidyltransferase activity.</text>
</comment>
<comment type="cofactor">
    <cofactor evidence="1">
        <name>Ni(2+)</name>
        <dbReference type="ChEBI" id="CHEBI:49786"/>
    </cofactor>
    <text evidence="1">Nickel for phosphatase activity.</text>
</comment>
<comment type="subunit">
    <text evidence="1">Monomer. Can also form homodimers and oligomers.</text>
</comment>
<comment type="domain">
    <text evidence="1">Comprises two domains: an N-terminal domain containing the nucleotidyltransferase activity and a C-terminal HD domain associated with both phosphodiesterase and phosphatase activities.</text>
</comment>
<comment type="miscellaneous">
    <text evidence="1">A single active site specifically recognizes both ATP and CTP and is responsible for their addition.</text>
</comment>
<comment type="similarity">
    <text evidence="1">Belongs to the tRNA nucleotidyltransferase/poly(A) polymerase family. Bacterial CCA-adding enzyme type 1 subfamily.</text>
</comment>
<feature type="chain" id="PRO_1000054306" description="Multifunctional CCA protein">
    <location>
        <begin position="1"/>
        <end position="406"/>
    </location>
</feature>
<feature type="domain" description="HD" evidence="1">
    <location>
        <begin position="228"/>
        <end position="329"/>
    </location>
</feature>
<feature type="binding site" evidence="1">
    <location>
        <position position="8"/>
    </location>
    <ligand>
        <name>ATP</name>
        <dbReference type="ChEBI" id="CHEBI:30616"/>
    </ligand>
</feature>
<feature type="binding site" evidence="1">
    <location>
        <position position="8"/>
    </location>
    <ligand>
        <name>CTP</name>
        <dbReference type="ChEBI" id="CHEBI:37563"/>
    </ligand>
</feature>
<feature type="binding site" evidence="1">
    <location>
        <position position="11"/>
    </location>
    <ligand>
        <name>ATP</name>
        <dbReference type="ChEBI" id="CHEBI:30616"/>
    </ligand>
</feature>
<feature type="binding site" evidence="1">
    <location>
        <position position="11"/>
    </location>
    <ligand>
        <name>CTP</name>
        <dbReference type="ChEBI" id="CHEBI:37563"/>
    </ligand>
</feature>
<feature type="binding site" evidence="1">
    <location>
        <position position="21"/>
    </location>
    <ligand>
        <name>Mg(2+)</name>
        <dbReference type="ChEBI" id="CHEBI:18420"/>
    </ligand>
</feature>
<feature type="binding site" evidence="1">
    <location>
        <position position="23"/>
    </location>
    <ligand>
        <name>Mg(2+)</name>
        <dbReference type="ChEBI" id="CHEBI:18420"/>
    </ligand>
</feature>
<feature type="binding site" evidence="1">
    <location>
        <position position="91"/>
    </location>
    <ligand>
        <name>ATP</name>
        <dbReference type="ChEBI" id="CHEBI:30616"/>
    </ligand>
</feature>
<feature type="binding site" evidence="1">
    <location>
        <position position="91"/>
    </location>
    <ligand>
        <name>CTP</name>
        <dbReference type="ChEBI" id="CHEBI:37563"/>
    </ligand>
</feature>
<feature type="binding site" evidence="1">
    <location>
        <position position="137"/>
    </location>
    <ligand>
        <name>ATP</name>
        <dbReference type="ChEBI" id="CHEBI:30616"/>
    </ligand>
</feature>
<feature type="binding site" evidence="1">
    <location>
        <position position="137"/>
    </location>
    <ligand>
        <name>CTP</name>
        <dbReference type="ChEBI" id="CHEBI:37563"/>
    </ligand>
</feature>
<feature type="binding site" evidence="1">
    <location>
        <position position="140"/>
    </location>
    <ligand>
        <name>ATP</name>
        <dbReference type="ChEBI" id="CHEBI:30616"/>
    </ligand>
</feature>
<feature type="binding site" evidence="1">
    <location>
        <position position="140"/>
    </location>
    <ligand>
        <name>CTP</name>
        <dbReference type="ChEBI" id="CHEBI:37563"/>
    </ligand>
</feature>
<gene>
    <name evidence="1" type="primary">cca</name>
    <name type="ordered locus">VIBHAR_00858</name>
</gene>
<name>CCA_VIBC1</name>
<dbReference type="EC" id="2.7.7.72" evidence="1"/>
<dbReference type="EC" id="3.1.3.-" evidence="1"/>
<dbReference type="EC" id="3.1.4.-" evidence="1"/>
<dbReference type="EMBL" id="CP000789">
    <property type="protein sequence ID" value="ABU69858.1"/>
    <property type="molecule type" value="Genomic_DNA"/>
</dbReference>
<dbReference type="RefSeq" id="WP_012126958.1">
    <property type="nucleotide sequence ID" value="NC_009783.1"/>
</dbReference>
<dbReference type="SMR" id="A7MWN9"/>
<dbReference type="KEGG" id="vha:VIBHAR_00858"/>
<dbReference type="PATRIC" id="fig|338187.25.peg.1758"/>
<dbReference type="Proteomes" id="UP000008152">
    <property type="component" value="Chromosome I"/>
</dbReference>
<dbReference type="GO" id="GO:0005524">
    <property type="term" value="F:ATP binding"/>
    <property type="evidence" value="ECO:0007669"/>
    <property type="project" value="UniProtKB-UniRule"/>
</dbReference>
<dbReference type="GO" id="GO:0004810">
    <property type="term" value="F:CCA tRNA nucleotidyltransferase activity"/>
    <property type="evidence" value="ECO:0007669"/>
    <property type="project" value="UniProtKB-UniRule"/>
</dbReference>
<dbReference type="GO" id="GO:0004112">
    <property type="term" value="F:cyclic-nucleotide phosphodiesterase activity"/>
    <property type="evidence" value="ECO:0007669"/>
    <property type="project" value="UniProtKB-UniRule"/>
</dbReference>
<dbReference type="GO" id="GO:0000287">
    <property type="term" value="F:magnesium ion binding"/>
    <property type="evidence" value="ECO:0007669"/>
    <property type="project" value="UniProtKB-UniRule"/>
</dbReference>
<dbReference type="GO" id="GO:0016791">
    <property type="term" value="F:phosphatase activity"/>
    <property type="evidence" value="ECO:0007669"/>
    <property type="project" value="UniProtKB-UniRule"/>
</dbReference>
<dbReference type="GO" id="GO:0000049">
    <property type="term" value="F:tRNA binding"/>
    <property type="evidence" value="ECO:0007669"/>
    <property type="project" value="UniProtKB-UniRule"/>
</dbReference>
<dbReference type="GO" id="GO:0042245">
    <property type="term" value="P:RNA repair"/>
    <property type="evidence" value="ECO:0007669"/>
    <property type="project" value="UniProtKB-KW"/>
</dbReference>
<dbReference type="GO" id="GO:0001680">
    <property type="term" value="P:tRNA 3'-terminal CCA addition"/>
    <property type="evidence" value="ECO:0007669"/>
    <property type="project" value="UniProtKB-UniRule"/>
</dbReference>
<dbReference type="CDD" id="cd00077">
    <property type="entry name" value="HDc"/>
    <property type="match status" value="1"/>
</dbReference>
<dbReference type="CDD" id="cd05398">
    <property type="entry name" value="NT_ClassII-CCAase"/>
    <property type="match status" value="1"/>
</dbReference>
<dbReference type="FunFam" id="1.10.3090.10:FF:000001">
    <property type="entry name" value="Multifunctional CCA protein"/>
    <property type="match status" value="1"/>
</dbReference>
<dbReference type="Gene3D" id="3.30.460.10">
    <property type="entry name" value="Beta Polymerase, domain 2"/>
    <property type="match status" value="1"/>
</dbReference>
<dbReference type="Gene3D" id="1.10.3090.10">
    <property type="entry name" value="cca-adding enzyme, domain 2"/>
    <property type="match status" value="1"/>
</dbReference>
<dbReference type="HAMAP" id="MF_01261">
    <property type="entry name" value="CCA_bact_type1"/>
    <property type="match status" value="1"/>
</dbReference>
<dbReference type="HAMAP" id="MF_01262">
    <property type="entry name" value="CCA_bact_type2"/>
    <property type="match status" value="1"/>
</dbReference>
<dbReference type="InterPro" id="IPR012006">
    <property type="entry name" value="CCA_bact"/>
</dbReference>
<dbReference type="InterPro" id="IPR003607">
    <property type="entry name" value="HD/PDEase_dom"/>
</dbReference>
<dbReference type="InterPro" id="IPR006674">
    <property type="entry name" value="HD_domain"/>
</dbReference>
<dbReference type="InterPro" id="IPR043519">
    <property type="entry name" value="NT_sf"/>
</dbReference>
<dbReference type="InterPro" id="IPR002646">
    <property type="entry name" value="PolA_pol_head_dom"/>
</dbReference>
<dbReference type="InterPro" id="IPR032828">
    <property type="entry name" value="PolyA_RNA-bd"/>
</dbReference>
<dbReference type="InterPro" id="IPR050124">
    <property type="entry name" value="tRNA_CCA-adding_enzyme"/>
</dbReference>
<dbReference type="NCBIfam" id="NF008137">
    <property type="entry name" value="PRK10885.1"/>
    <property type="match status" value="1"/>
</dbReference>
<dbReference type="PANTHER" id="PTHR47545">
    <property type="entry name" value="MULTIFUNCTIONAL CCA PROTEIN"/>
    <property type="match status" value="1"/>
</dbReference>
<dbReference type="PANTHER" id="PTHR47545:SF1">
    <property type="entry name" value="MULTIFUNCTIONAL CCA PROTEIN"/>
    <property type="match status" value="1"/>
</dbReference>
<dbReference type="Pfam" id="PF01966">
    <property type="entry name" value="HD"/>
    <property type="match status" value="1"/>
</dbReference>
<dbReference type="Pfam" id="PF01743">
    <property type="entry name" value="PolyA_pol"/>
    <property type="match status" value="1"/>
</dbReference>
<dbReference type="Pfam" id="PF12627">
    <property type="entry name" value="PolyA_pol_RNAbd"/>
    <property type="match status" value="1"/>
</dbReference>
<dbReference type="PIRSF" id="PIRSF000813">
    <property type="entry name" value="CCA_bact"/>
    <property type="match status" value="1"/>
</dbReference>
<dbReference type="SUPFAM" id="SSF81301">
    <property type="entry name" value="Nucleotidyltransferase"/>
    <property type="match status" value="1"/>
</dbReference>
<dbReference type="SUPFAM" id="SSF81891">
    <property type="entry name" value="Poly A polymerase C-terminal region-like"/>
    <property type="match status" value="1"/>
</dbReference>
<dbReference type="PROSITE" id="PS51831">
    <property type="entry name" value="HD"/>
    <property type="match status" value="1"/>
</dbReference>
<reference key="1">
    <citation type="submission" date="2007-08" db="EMBL/GenBank/DDBJ databases">
        <authorList>
            <consortium name="The Vibrio harveyi Genome Sequencing Project"/>
            <person name="Bassler B."/>
            <person name="Clifton S.W."/>
            <person name="Fulton L."/>
            <person name="Delehaunty K."/>
            <person name="Fronick C."/>
            <person name="Harrison M."/>
            <person name="Markivic C."/>
            <person name="Fulton R."/>
            <person name="Tin-Wollam A.-M."/>
            <person name="Shah N."/>
            <person name="Pepin K."/>
            <person name="Nash W."/>
            <person name="Thiruvilangam P."/>
            <person name="Bhonagiri V."/>
            <person name="Waters C."/>
            <person name="Tu K.C."/>
            <person name="Irgon J."/>
            <person name="Wilson R.K."/>
        </authorList>
    </citation>
    <scope>NUCLEOTIDE SEQUENCE [LARGE SCALE GENOMIC DNA]</scope>
    <source>
        <strain>ATCC BAA-1116 / BB120</strain>
    </source>
</reference>
<protein>
    <recommendedName>
        <fullName evidence="1">Multifunctional CCA protein</fullName>
    </recommendedName>
    <domain>
        <recommendedName>
            <fullName evidence="1">CCA-adding enzyme</fullName>
            <ecNumber evidence="1">2.7.7.72</ecNumber>
        </recommendedName>
        <alternativeName>
            <fullName evidence="1">CCA tRNA nucleotidyltransferase</fullName>
        </alternativeName>
        <alternativeName>
            <fullName evidence="1">tRNA CCA-pyrophosphorylase</fullName>
        </alternativeName>
        <alternativeName>
            <fullName evidence="1">tRNA adenylyl-/cytidylyl-transferase</fullName>
        </alternativeName>
        <alternativeName>
            <fullName evidence="1">tRNA nucleotidyltransferase</fullName>
        </alternativeName>
        <alternativeName>
            <fullName evidence="1">tRNA-NT</fullName>
        </alternativeName>
    </domain>
    <domain>
        <recommendedName>
            <fullName evidence="1">2'-nucleotidase</fullName>
            <ecNumber evidence="1">3.1.3.-</ecNumber>
        </recommendedName>
    </domain>
    <domain>
        <recommendedName>
            <fullName evidence="1">2',3'-cyclic phosphodiesterase</fullName>
            <ecNumber evidence="1">3.1.4.-</ecNumber>
        </recommendedName>
    </domain>
    <domain>
        <recommendedName>
            <fullName evidence="1">Phosphatase</fullName>
            <ecNumber evidence="1">3.1.3.-</ecNumber>
        </recommendedName>
    </domain>
</protein>
<keyword id="KW-0067">ATP-binding</keyword>
<keyword id="KW-0378">Hydrolase</keyword>
<keyword id="KW-0460">Magnesium</keyword>
<keyword id="KW-0479">Metal-binding</keyword>
<keyword id="KW-0511">Multifunctional enzyme</keyword>
<keyword id="KW-0533">Nickel</keyword>
<keyword id="KW-0547">Nucleotide-binding</keyword>
<keyword id="KW-0548">Nucleotidyltransferase</keyword>
<keyword id="KW-0692">RNA repair</keyword>
<keyword id="KW-0694">RNA-binding</keyword>
<keyword id="KW-0808">Transferase</keyword>
<keyword id="KW-0819">tRNA processing</keyword>
<proteinExistence type="inferred from homology"/>
<evidence type="ECO:0000255" key="1">
    <source>
        <dbReference type="HAMAP-Rule" id="MF_01261"/>
    </source>
</evidence>